<protein>
    <recommendedName>
        <fullName evidence="1">Isoleucine--tRNA ligase</fullName>
        <ecNumber evidence="1">6.1.1.5</ecNumber>
    </recommendedName>
    <alternativeName>
        <fullName evidence="1">Isoleucyl-tRNA synthetase</fullName>
        <shortName evidence="1">IleRS</shortName>
    </alternativeName>
</protein>
<feature type="chain" id="PRO_1000022075" description="Isoleucine--tRNA ligase">
    <location>
        <begin position="1"/>
        <end position="941"/>
    </location>
</feature>
<feature type="short sequence motif" description="'HIGH' region">
    <location>
        <begin position="58"/>
        <end position="68"/>
    </location>
</feature>
<feature type="short sequence motif" description="'KMSKS' region">
    <location>
        <begin position="605"/>
        <end position="609"/>
    </location>
</feature>
<feature type="binding site" evidence="1">
    <location>
        <position position="564"/>
    </location>
    <ligand>
        <name>L-isoleucyl-5'-AMP</name>
        <dbReference type="ChEBI" id="CHEBI:178002"/>
    </ligand>
</feature>
<feature type="binding site" evidence="1">
    <location>
        <position position="608"/>
    </location>
    <ligand>
        <name>ATP</name>
        <dbReference type="ChEBI" id="CHEBI:30616"/>
    </ligand>
</feature>
<feature type="binding site" evidence="1">
    <location>
        <position position="904"/>
    </location>
    <ligand>
        <name>Zn(2+)</name>
        <dbReference type="ChEBI" id="CHEBI:29105"/>
    </ligand>
</feature>
<feature type="binding site" evidence="1">
    <location>
        <position position="907"/>
    </location>
    <ligand>
        <name>Zn(2+)</name>
        <dbReference type="ChEBI" id="CHEBI:29105"/>
    </ligand>
</feature>
<feature type="binding site" evidence="1">
    <location>
        <position position="924"/>
    </location>
    <ligand>
        <name>Zn(2+)</name>
        <dbReference type="ChEBI" id="CHEBI:29105"/>
    </ligand>
</feature>
<feature type="binding site" evidence="1">
    <location>
        <position position="927"/>
    </location>
    <ligand>
        <name>Zn(2+)</name>
        <dbReference type="ChEBI" id="CHEBI:29105"/>
    </ligand>
</feature>
<keyword id="KW-0030">Aminoacyl-tRNA synthetase</keyword>
<keyword id="KW-0067">ATP-binding</keyword>
<keyword id="KW-0963">Cytoplasm</keyword>
<keyword id="KW-0436">Ligase</keyword>
<keyword id="KW-0479">Metal-binding</keyword>
<keyword id="KW-0547">Nucleotide-binding</keyword>
<keyword id="KW-0648">Protein biosynthesis</keyword>
<keyword id="KW-1185">Reference proteome</keyword>
<keyword id="KW-0862">Zinc</keyword>
<sequence length="941" mass="106642">MSDYKHTLNLPQTDFPMRGNLPQREPDMLKRWGDIELYEKIREEFKGREKFILHDGPPYANGNIHLGHAVNKILKDIIVKSKTVAGYDAPYVPGWDCHGLPIEHKVETMIGRAGDKVGYKEFRRKCREYALEQVAKQREDFIRLGVFGDWFKPYLTLDFKTEADIIRALGKIATSGHLQKGYKPVYWSVVGGSALAEAEVEYKDKTSNSIDVSYPAENEQDLLSAFADASGEGAVSIVIWTTTPWTLPASLAVSLGAEIDYALTQCSVDGRPQRWIVAEKMLESVMARCGVEDYQVVGRCTGQDLEGKTFLHPFYKRSIPALLGDHVTLDAGTGVVHTAPDHGMEDFAVCNKYGIETINPLDDRGVYRDNVELFAGEHVYKVDDHVIEVLKERGRLLSHGKITHSYAHCWRTKTPLIYRATPQWFISMDKQGLRDQALAEIKLVRWVPSWGQNRIEAMIEQSPDWCISRQRTWGVPIAFFVHKETQELHPDTARLVEEVAKQVEKTGIDAWWDINAEDLLGADAQNYEKVTDTLDVWFDSGVTHSAVLEQREELGQFPADLYLEGSDQHRGWFQSSLKTAVAIKGKAPYRQVLTHGFTVDEKGHKMSKSLGNGIEPQEVMNKLGADILRLWVAATDYSAEMVLSKNILERTADSYRRIRNTSRFLLANINDFDPVKDMVAMDDLLALDRWIVDRAWLLQEELKKAYEQYNFVQVYQKVHNFCSVELGSFYLDVIKDRQYTMKLDSLGCRSAQTAQYHVIEALVRWIAPILSFTAEEIWSYIPGQRAESIFLETFYEGLQPLAEGSEMGRDYWSRLLRVRTSVNKALEEARNAGKVKGSLTTEVSLFATPEMQHDLNALGEELRFVFITSGASVFGVEDASESNSVATETEGLRVGIRSSEHKKCGRCWHHREDVGAHGSHEDLCGRCIENIDGSGEERKYA</sequence>
<name>SYI_HAHCH</name>
<accession>Q2S9T9</accession>
<dbReference type="EC" id="6.1.1.5" evidence="1"/>
<dbReference type="EMBL" id="CP000155">
    <property type="protein sequence ID" value="ABC32585.1"/>
    <property type="molecule type" value="Genomic_DNA"/>
</dbReference>
<dbReference type="RefSeq" id="WP_011399643.1">
    <property type="nucleotide sequence ID" value="NC_007645.1"/>
</dbReference>
<dbReference type="SMR" id="Q2S9T9"/>
<dbReference type="STRING" id="349521.HCH_05933"/>
<dbReference type="KEGG" id="hch:HCH_05933"/>
<dbReference type="eggNOG" id="COG0060">
    <property type="taxonomic scope" value="Bacteria"/>
</dbReference>
<dbReference type="HOGENOM" id="CLU_001493_7_1_6"/>
<dbReference type="OrthoDB" id="9810365at2"/>
<dbReference type="Proteomes" id="UP000000238">
    <property type="component" value="Chromosome"/>
</dbReference>
<dbReference type="GO" id="GO:0005829">
    <property type="term" value="C:cytosol"/>
    <property type="evidence" value="ECO:0007669"/>
    <property type="project" value="TreeGrafter"/>
</dbReference>
<dbReference type="GO" id="GO:0002161">
    <property type="term" value="F:aminoacyl-tRNA deacylase activity"/>
    <property type="evidence" value="ECO:0007669"/>
    <property type="project" value="InterPro"/>
</dbReference>
<dbReference type="GO" id="GO:0005524">
    <property type="term" value="F:ATP binding"/>
    <property type="evidence" value="ECO:0007669"/>
    <property type="project" value="UniProtKB-UniRule"/>
</dbReference>
<dbReference type="GO" id="GO:0004822">
    <property type="term" value="F:isoleucine-tRNA ligase activity"/>
    <property type="evidence" value="ECO:0007669"/>
    <property type="project" value="UniProtKB-UniRule"/>
</dbReference>
<dbReference type="GO" id="GO:0000049">
    <property type="term" value="F:tRNA binding"/>
    <property type="evidence" value="ECO:0007669"/>
    <property type="project" value="InterPro"/>
</dbReference>
<dbReference type="GO" id="GO:0008270">
    <property type="term" value="F:zinc ion binding"/>
    <property type="evidence" value="ECO:0007669"/>
    <property type="project" value="UniProtKB-UniRule"/>
</dbReference>
<dbReference type="GO" id="GO:0006428">
    <property type="term" value="P:isoleucyl-tRNA aminoacylation"/>
    <property type="evidence" value="ECO:0007669"/>
    <property type="project" value="UniProtKB-UniRule"/>
</dbReference>
<dbReference type="CDD" id="cd07960">
    <property type="entry name" value="Anticodon_Ia_Ile_BEm"/>
    <property type="match status" value="1"/>
</dbReference>
<dbReference type="CDD" id="cd00818">
    <property type="entry name" value="IleRS_core"/>
    <property type="match status" value="1"/>
</dbReference>
<dbReference type="FunFam" id="1.10.730.20:FF:000001">
    <property type="entry name" value="Isoleucine--tRNA ligase"/>
    <property type="match status" value="1"/>
</dbReference>
<dbReference type="FunFam" id="3.40.50.620:FF:000042">
    <property type="entry name" value="Isoleucine--tRNA ligase"/>
    <property type="match status" value="1"/>
</dbReference>
<dbReference type="FunFam" id="3.40.50.620:FF:000048">
    <property type="entry name" value="Isoleucine--tRNA ligase"/>
    <property type="match status" value="1"/>
</dbReference>
<dbReference type="Gene3D" id="1.10.730.20">
    <property type="match status" value="1"/>
</dbReference>
<dbReference type="Gene3D" id="3.40.50.620">
    <property type="entry name" value="HUPs"/>
    <property type="match status" value="2"/>
</dbReference>
<dbReference type="HAMAP" id="MF_02002">
    <property type="entry name" value="Ile_tRNA_synth_type1"/>
    <property type="match status" value="1"/>
</dbReference>
<dbReference type="InterPro" id="IPR001412">
    <property type="entry name" value="aa-tRNA-synth_I_CS"/>
</dbReference>
<dbReference type="InterPro" id="IPR002300">
    <property type="entry name" value="aa-tRNA-synth_Ia"/>
</dbReference>
<dbReference type="InterPro" id="IPR033708">
    <property type="entry name" value="Anticodon_Ile_BEm"/>
</dbReference>
<dbReference type="InterPro" id="IPR002301">
    <property type="entry name" value="Ile-tRNA-ligase"/>
</dbReference>
<dbReference type="InterPro" id="IPR023585">
    <property type="entry name" value="Ile-tRNA-ligase_type1"/>
</dbReference>
<dbReference type="InterPro" id="IPR050081">
    <property type="entry name" value="Ile-tRNA_ligase"/>
</dbReference>
<dbReference type="InterPro" id="IPR013155">
    <property type="entry name" value="M/V/L/I-tRNA-synth_anticd-bd"/>
</dbReference>
<dbReference type="InterPro" id="IPR014729">
    <property type="entry name" value="Rossmann-like_a/b/a_fold"/>
</dbReference>
<dbReference type="InterPro" id="IPR009080">
    <property type="entry name" value="tRNAsynth_Ia_anticodon-bd"/>
</dbReference>
<dbReference type="InterPro" id="IPR009008">
    <property type="entry name" value="Val/Leu/Ile-tRNA-synth_edit"/>
</dbReference>
<dbReference type="InterPro" id="IPR010663">
    <property type="entry name" value="Znf_FPG/IleRS"/>
</dbReference>
<dbReference type="NCBIfam" id="TIGR00392">
    <property type="entry name" value="ileS"/>
    <property type="match status" value="1"/>
</dbReference>
<dbReference type="PANTHER" id="PTHR42765:SF1">
    <property type="entry name" value="ISOLEUCINE--TRNA LIGASE, MITOCHONDRIAL"/>
    <property type="match status" value="1"/>
</dbReference>
<dbReference type="PANTHER" id="PTHR42765">
    <property type="entry name" value="SOLEUCYL-TRNA SYNTHETASE"/>
    <property type="match status" value="1"/>
</dbReference>
<dbReference type="Pfam" id="PF08264">
    <property type="entry name" value="Anticodon_1"/>
    <property type="match status" value="1"/>
</dbReference>
<dbReference type="Pfam" id="PF00133">
    <property type="entry name" value="tRNA-synt_1"/>
    <property type="match status" value="1"/>
</dbReference>
<dbReference type="Pfam" id="PF06827">
    <property type="entry name" value="zf-FPG_IleRS"/>
    <property type="match status" value="1"/>
</dbReference>
<dbReference type="PRINTS" id="PR00984">
    <property type="entry name" value="TRNASYNTHILE"/>
</dbReference>
<dbReference type="SUPFAM" id="SSF47323">
    <property type="entry name" value="Anticodon-binding domain of a subclass of class I aminoacyl-tRNA synthetases"/>
    <property type="match status" value="1"/>
</dbReference>
<dbReference type="SUPFAM" id="SSF52374">
    <property type="entry name" value="Nucleotidylyl transferase"/>
    <property type="match status" value="1"/>
</dbReference>
<dbReference type="SUPFAM" id="SSF50677">
    <property type="entry name" value="ValRS/IleRS/LeuRS editing domain"/>
    <property type="match status" value="1"/>
</dbReference>
<dbReference type="PROSITE" id="PS00178">
    <property type="entry name" value="AA_TRNA_LIGASE_I"/>
    <property type="match status" value="1"/>
</dbReference>
<organism>
    <name type="scientific">Hahella chejuensis (strain KCTC 2396)</name>
    <dbReference type="NCBI Taxonomy" id="349521"/>
    <lineage>
        <taxon>Bacteria</taxon>
        <taxon>Pseudomonadati</taxon>
        <taxon>Pseudomonadota</taxon>
        <taxon>Gammaproteobacteria</taxon>
        <taxon>Oceanospirillales</taxon>
        <taxon>Hahellaceae</taxon>
        <taxon>Hahella</taxon>
    </lineage>
</organism>
<reference key="1">
    <citation type="journal article" date="2005" name="Nucleic Acids Res.">
        <title>Genomic blueprint of Hahella chejuensis, a marine microbe producing an algicidal agent.</title>
        <authorList>
            <person name="Jeong H."/>
            <person name="Yim J.H."/>
            <person name="Lee C."/>
            <person name="Choi S.-H."/>
            <person name="Park Y.K."/>
            <person name="Yoon S.H."/>
            <person name="Hur C.-G."/>
            <person name="Kang H.-Y."/>
            <person name="Kim D."/>
            <person name="Lee H.H."/>
            <person name="Park K.H."/>
            <person name="Park S.-H."/>
            <person name="Park H.-S."/>
            <person name="Lee H.K."/>
            <person name="Oh T.K."/>
            <person name="Kim J.F."/>
        </authorList>
    </citation>
    <scope>NUCLEOTIDE SEQUENCE [LARGE SCALE GENOMIC DNA]</scope>
    <source>
        <strain>KCTC 2396</strain>
    </source>
</reference>
<comment type="function">
    <text evidence="1">Catalyzes the attachment of isoleucine to tRNA(Ile). As IleRS can inadvertently accommodate and process structurally similar amino acids such as valine, to avoid such errors it has two additional distinct tRNA(Ile)-dependent editing activities. One activity is designated as 'pretransfer' editing and involves the hydrolysis of activated Val-AMP. The other activity is designated 'posttransfer' editing and involves deacylation of mischarged Val-tRNA(Ile).</text>
</comment>
<comment type="catalytic activity">
    <reaction evidence="1">
        <text>tRNA(Ile) + L-isoleucine + ATP = L-isoleucyl-tRNA(Ile) + AMP + diphosphate</text>
        <dbReference type="Rhea" id="RHEA:11060"/>
        <dbReference type="Rhea" id="RHEA-COMP:9666"/>
        <dbReference type="Rhea" id="RHEA-COMP:9695"/>
        <dbReference type="ChEBI" id="CHEBI:30616"/>
        <dbReference type="ChEBI" id="CHEBI:33019"/>
        <dbReference type="ChEBI" id="CHEBI:58045"/>
        <dbReference type="ChEBI" id="CHEBI:78442"/>
        <dbReference type="ChEBI" id="CHEBI:78528"/>
        <dbReference type="ChEBI" id="CHEBI:456215"/>
        <dbReference type="EC" id="6.1.1.5"/>
    </reaction>
</comment>
<comment type="cofactor">
    <cofactor evidence="1">
        <name>Zn(2+)</name>
        <dbReference type="ChEBI" id="CHEBI:29105"/>
    </cofactor>
    <text evidence="1">Binds 1 zinc ion per subunit.</text>
</comment>
<comment type="subunit">
    <text evidence="1">Monomer.</text>
</comment>
<comment type="subcellular location">
    <subcellularLocation>
        <location evidence="1">Cytoplasm</location>
    </subcellularLocation>
</comment>
<comment type="domain">
    <text evidence="1">IleRS has two distinct active sites: one for aminoacylation and one for editing. The misactivated valine is translocated from the active site to the editing site, which sterically excludes the correctly activated isoleucine. The single editing site contains two valyl binding pockets, one specific for each substrate (Val-AMP or Val-tRNA(Ile)).</text>
</comment>
<comment type="similarity">
    <text evidence="1">Belongs to the class-I aminoacyl-tRNA synthetase family. IleS type 1 subfamily.</text>
</comment>
<proteinExistence type="inferred from homology"/>
<evidence type="ECO:0000255" key="1">
    <source>
        <dbReference type="HAMAP-Rule" id="MF_02002"/>
    </source>
</evidence>
<gene>
    <name evidence="1" type="primary">ileS</name>
    <name type="ordered locus">HCH_05933</name>
</gene>